<keyword id="KW-0027">Amidation</keyword>
<keyword id="KW-0903">Direct protein sequencing</keyword>
<keyword id="KW-0527">Neuropeptide</keyword>
<keyword id="KW-0873">Pyrrolidone carboxylic acid</keyword>
<keyword id="KW-0964">Secreted</keyword>
<dbReference type="PIR" id="A49761">
    <property type="entry name" value="A49761"/>
</dbReference>
<dbReference type="GO" id="GO:0005576">
    <property type="term" value="C:extracellular region"/>
    <property type="evidence" value="ECO:0007669"/>
    <property type="project" value="UniProtKB-SubCell"/>
</dbReference>
<dbReference type="GO" id="GO:0005184">
    <property type="term" value="F:neuropeptide hormone activity"/>
    <property type="evidence" value="ECO:0007669"/>
    <property type="project" value="InterPro"/>
</dbReference>
<dbReference type="GO" id="GO:0007218">
    <property type="term" value="P:neuropeptide signaling pathway"/>
    <property type="evidence" value="ECO:0007669"/>
    <property type="project" value="UniProtKB-KW"/>
</dbReference>
<dbReference type="InterPro" id="IPR001484">
    <property type="entry name" value="Pyrokinin_CS"/>
</dbReference>
<dbReference type="PROSITE" id="PS00539">
    <property type="entry name" value="PYROKININ"/>
    <property type="match status" value="1"/>
</dbReference>
<feature type="peptide" id="PRO_0000044317" description="Locustapyrokinin-1">
    <location>
        <begin position="1"/>
        <end position="16"/>
    </location>
</feature>
<feature type="modified residue" description="Pyrrolidone carboxylic acid" evidence="1">
    <location>
        <position position="1"/>
    </location>
</feature>
<feature type="modified residue" description="Leucine amide" evidence="1">
    <location>
        <position position="16"/>
    </location>
</feature>
<evidence type="ECO:0000269" key="1">
    <source>
    </source>
</evidence>
<evidence type="ECO:0000305" key="2"/>
<organism>
    <name type="scientific">Locusta migratoria</name>
    <name type="common">Migratory locust</name>
    <dbReference type="NCBI Taxonomy" id="7004"/>
    <lineage>
        <taxon>Eukaryota</taxon>
        <taxon>Metazoa</taxon>
        <taxon>Ecdysozoa</taxon>
        <taxon>Arthropoda</taxon>
        <taxon>Hexapoda</taxon>
        <taxon>Insecta</taxon>
        <taxon>Pterygota</taxon>
        <taxon>Neoptera</taxon>
        <taxon>Polyneoptera</taxon>
        <taxon>Orthoptera</taxon>
        <taxon>Caelifera</taxon>
        <taxon>Acrididea</taxon>
        <taxon>Acridomorpha</taxon>
        <taxon>Acridoidea</taxon>
        <taxon>Acrididae</taxon>
        <taxon>Oedipodinae</taxon>
        <taxon>Locusta</taxon>
    </lineage>
</organism>
<accession>P20404</accession>
<comment type="function">
    <text>Mediates visceral muscle contractile activity (myotropic activity).</text>
</comment>
<comment type="subcellular location">
    <subcellularLocation>
        <location>Secreted</location>
    </subcellularLocation>
</comment>
<comment type="similarity">
    <text evidence="2">Belongs to the pyrokinin family.</text>
</comment>
<protein>
    <recommendedName>
        <fullName>Locustapyrokinin-1</fullName>
    </recommendedName>
    <alternativeName>
        <fullName>Lom-PK-1</fullName>
    </alternativeName>
</protein>
<proteinExistence type="evidence at protein level"/>
<sequence>QDSGDGWPQQPFVPRL</sequence>
<name>LPK1_LOCMI</name>
<reference key="1">
    <citation type="journal article" date="1991" name="Gen. Comp. Endocrinol.">
        <title>Isolation, primary structure, and synthesis of locustapyrokinin: a myotropic peptide of Locusta migratoria.</title>
        <authorList>
            <person name="Schoofs L."/>
            <person name="Holman G.M."/>
            <person name="Hayes T.K."/>
            <person name="Nachman R.J."/>
            <person name="de Loof A."/>
        </authorList>
    </citation>
    <scope>PROTEIN SEQUENCE</scope>
    <scope>PYROGLUTAMATE FORMATION AT GLN-1</scope>
    <scope>AMIDATION AT LEU-16</scope>
    <source>
        <tissue>Corpora cardiaca</tissue>
    </source>
</reference>